<dbReference type="EMBL" id="CH476665">
    <property type="protein sequence ID" value="EDN04798.1"/>
    <property type="status" value="ALT_SEQ"/>
    <property type="molecule type" value="Genomic_DNA"/>
</dbReference>
<dbReference type="STRING" id="339724.A6RFP4"/>
<dbReference type="KEGG" id="aje:HCAG_08460"/>
<dbReference type="HOGENOM" id="CLU_040829_0_0_1"/>
<dbReference type="OrthoDB" id="5891at299071"/>
<dbReference type="Proteomes" id="UP000009297">
    <property type="component" value="Unassembled WGS sequence"/>
</dbReference>
<dbReference type="GO" id="GO:0030479">
    <property type="term" value="C:actin cortical patch"/>
    <property type="evidence" value="ECO:0007669"/>
    <property type="project" value="UniProtKB-SubCell"/>
</dbReference>
<dbReference type="GO" id="GO:0010008">
    <property type="term" value="C:endosome membrane"/>
    <property type="evidence" value="ECO:0007669"/>
    <property type="project" value="UniProtKB-SubCell"/>
</dbReference>
<dbReference type="GO" id="GO:0005886">
    <property type="term" value="C:plasma membrane"/>
    <property type="evidence" value="ECO:0007669"/>
    <property type="project" value="UniProtKB-SubCell"/>
</dbReference>
<dbReference type="GO" id="GO:0003779">
    <property type="term" value="F:actin binding"/>
    <property type="evidence" value="ECO:0007669"/>
    <property type="project" value="UniProtKB-KW"/>
</dbReference>
<dbReference type="GO" id="GO:0005509">
    <property type="term" value="F:calcium ion binding"/>
    <property type="evidence" value="ECO:0007669"/>
    <property type="project" value="InterPro"/>
</dbReference>
<dbReference type="GO" id="GO:0007015">
    <property type="term" value="P:actin filament organization"/>
    <property type="evidence" value="ECO:0007669"/>
    <property type="project" value="InterPro"/>
</dbReference>
<dbReference type="GO" id="GO:0006897">
    <property type="term" value="P:endocytosis"/>
    <property type="evidence" value="ECO:0007669"/>
    <property type="project" value="UniProtKB-KW"/>
</dbReference>
<dbReference type="GO" id="GO:0016197">
    <property type="term" value="P:endosomal transport"/>
    <property type="evidence" value="ECO:0007669"/>
    <property type="project" value="TreeGrafter"/>
</dbReference>
<dbReference type="CDD" id="cd00052">
    <property type="entry name" value="EH"/>
    <property type="match status" value="1"/>
</dbReference>
<dbReference type="FunFam" id="1.10.238.10:FF:000339">
    <property type="entry name" value="Actin cytoskeleton-regulatory complex protein END3"/>
    <property type="match status" value="1"/>
</dbReference>
<dbReference type="FunFam" id="1.10.238.10:FF:000323">
    <property type="entry name" value="Actin cytoskeleton-regulatory complex protein end3"/>
    <property type="match status" value="1"/>
</dbReference>
<dbReference type="Gene3D" id="1.10.238.10">
    <property type="entry name" value="EF-hand"/>
    <property type="match status" value="2"/>
</dbReference>
<dbReference type="InterPro" id="IPR011992">
    <property type="entry name" value="EF-hand-dom_pair"/>
</dbReference>
<dbReference type="InterPro" id="IPR018247">
    <property type="entry name" value="EF_Hand_1_Ca_BS"/>
</dbReference>
<dbReference type="InterPro" id="IPR002048">
    <property type="entry name" value="EF_hand_dom"/>
</dbReference>
<dbReference type="InterPro" id="IPR000261">
    <property type="entry name" value="EH_dom"/>
</dbReference>
<dbReference type="InterPro" id="IPR025604">
    <property type="entry name" value="End3"/>
</dbReference>
<dbReference type="PANTHER" id="PTHR11216">
    <property type="entry name" value="EH DOMAIN"/>
    <property type="match status" value="1"/>
</dbReference>
<dbReference type="PANTHER" id="PTHR11216:SF174">
    <property type="entry name" value="GH06923P"/>
    <property type="match status" value="1"/>
</dbReference>
<dbReference type="Pfam" id="PF12763">
    <property type="entry name" value="EH"/>
    <property type="match status" value="1"/>
</dbReference>
<dbReference type="Pfam" id="PF12761">
    <property type="entry name" value="End3"/>
    <property type="match status" value="1"/>
</dbReference>
<dbReference type="SMART" id="SM00054">
    <property type="entry name" value="EFh"/>
    <property type="match status" value="1"/>
</dbReference>
<dbReference type="SMART" id="SM00027">
    <property type="entry name" value="EH"/>
    <property type="match status" value="2"/>
</dbReference>
<dbReference type="SUPFAM" id="SSF47473">
    <property type="entry name" value="EF-hand"/>
    <property type="match status" value="2"/>
</dbReference>
<dbReference type="PROSITE" id="PS00018">
    <property type="entry name" value="EF_HAND_1"/>
    <property type="match status" value="1"/>
</dbReference>
<dbReference type="PROSITE" id="PS50222">
    <property type="entry name" value="EF_HAND_2"/>
    <property type="match status" value="1"/>
</dbReference>
<dbReference type="PROSITE" id="PS50031">
    <property type="entry name" value="EH"/>
    <property type="match status" value="2"/>
</dbReference>
<feature type="chain" id="PRO_0000349434" description="Actin cytoskeleton-regulatory complex protein END3">
    <location>
        <begin position="1"/>
        <end position="405"/>
    </location>
</feature>
<feature type="domain" description="EH 1" evidence="3">
    <location>
        <begin position="10"/>
        <end position="100"/>
    </location>
</feature>
<feature type="domain" description="EF-hand" evidence="4">
    <location>
        <begin position="42"/>
        <end position="77"/>
    </location>
</feature>
<feature type="domain" description="EH 2" evidence="3">
    <location>
        <begin position="139"/>
        <end position="227"/>
    </location>
</feature>
<feature type="coiled-coil region" evidence="2">
    <location>
        <begin position="280"/>
        <end position="405"/>
    </location>
</feature>
<feature type="binding site" evidence="4">
    <location>
        <position position="55"/>
    </location>
    <ligand>
        <name>Ca(2+)</name>
        <dbReference type="ChEBI" id="CHEBI:29108"/>
    </ligand>
</feature>
<feature type="binding site" evidence="4">
    <location>
        <position position="57"/>
    </location>
    <ligand>
        <name>Ca(2+)</name>
        <dbReference type="ChEBI" id="CHEBI:29108"/>
    </ligand>
</feature>
<feature type="binding site" evidence="4">
    <location>
        <position position="59"/>
    </location>
    <ligand>
        <name>Ca(2+)</name>
        <dbReference type="ChEBI" id="CHEBI:29108"/>
    </ligand>
</feature>
<feature type="binding site" evidence="4">
    <location>
        <position position="61"/>
    </location>
    <ligand>
        <name>Ca(2+)</name>
        <dbReference type="ChEBI" id="CHEBI:29108"/>
    </ligand>
</feature>
<feature type="binding site" evidence="4">
    <location>
        <position position="66"/>
    </location>
    <ligand>
        <name>Ca(2+)</name>
        <dbReference type="ChEBI" id="CHEBI:29108"/>
    </ligand>
</feature>
<evidence type="ECO:0000250" key="1"/>
<evidence type="ECO:0000255" key="2"/>
<evidence type="ECO:0000255" key="3">
    <source>
        <dbReference type="PROSITE-ProRule" id="PRU00077"/>
    </source>
</evidence>
<evidence type="ECO:0000255" key="4">
    <source>
        <dbReference type="PROSITE-ProRule" id="PRU00448"/>
    </source>
</evidence>
<evidence type="ECO:0000305" key="5"/>
<accession>A6RFP4</accession>
<protein>
    <recommendedName>
        <fullName>Actin cytoskeleton-regulatory complex protein END3</fullName>
    </recommendedName>
    <alternativeName>
        <fullName>Endocytosis protein 3</fullName>
    </alternativeName>
</protein>
<organism>
    <name type="scientific">Ajellomyces capsulatus (strain NAm1 / WU24)</name>
    <name type="common">Darling's disease fungus</name>
    <name type="synonym">Histoplasma capsulatum</name>
    <dbReference type="NCBI Taxonomy" id="2059318"/>
    <lineage>
        <taxon>Eukaryota</taxon>
        <taxon>Fungi</taxon>
        <taxon>Dikarya</taxon>
        <taxon>Ascomycota</taxon>
        <taxon>Pezizomycotina</taxon>
        <taxon>Eurotiomycetes</taxon>
        <taxon>Eurotiomycetidae</taxon>
        <taxon>Onygenales</taxon>
        <taxon>Ajellomycetaceae</taxon>
        <taxon>Histoplasma</taxon>
    </lineage>
</organism>
<name>END3_AJECN</name>
<proteinExistence type="inferred from homology"/>
<reference key="1">
    <citation type="journal article" date="2009" name="Genome Res.">
        <title>Comparative genomic analyses of the human fungal pathogens Coccidioides and their relatives.</title>
        <authorList>
            <person name="Sharpton T.J."/>
            <person name="Stajich J.E."/>
            <person name="Rounsley S.D."/>
            <person name="Gardner M.J."/>
            <person name="Wortman J.R."/>
            <person name="Jordar V.S."/>
            <person name="Maiti R."/>
            <person name="Kodira C.D."/>
            <person name="Neafsey D.E."/>
            <person name="Zeng Q."/>
            <person name="Hung C.-Y."/>
            <person name="McMahan C."/>
            <person name="Muszewska A."/>
            <person name="Grynberg M."/>
            <person name="Mandel M.A."/>
            <person name="Kellner E.M."/>
            <person name="Barker B.M."/>
            <person name="Galgiani J.N."/>
            <person name="Orbach M.J."/>
            <person name="Kirkland T.N."/>
            <person name="Cole G.T."/>
            <person name="Henn M.R."/>
            <person name="Birren B.W."/>
            <person name="Taylor J.W."/>
        </authorList>
    </citation>
    <scope>NUCLEOTIDE SEQUENCE [LARGE SCALE GENOMIC DNA]</scope>
    <source>
        <strain>NAm1 / WU24</strain>
    </source>
</reference>
<comment type="function">
    <text evidence="1">Component of the PAN1 actin cytoskeleton-regulatory complex required for the internalization of endosomes during actin-coupled endocytosis. The complex links the site of endocytosis to the cell membrane-associated actin cytoskeleton. Mediates uptake of external molecules and vacuolar degradation of plasma membrane proteins. Plays a role in the proper organization of the cell membrane-associated actin cytoskeleton and promotes its destabilization (By similarity).</text>
</comment>
<comment type="subunit">
    <text evidence="1">Component of the PAN1 actin cytoskeleton-regulatory complex.</text>
</comment>
<comment type="subcellular location">
    <subcellularLocation>
        <location evidence="1">Cell membrane</location>
        <topology evidence="1">Peripheral membrane protein</topology>
        <orientation evidence="1">Cytoplasmic side</orientation>
    </subcellularLocation>
    <subcellularLocation>
        <location evidence="1">Endosome membrane</location>
        <topology evidence="1">Peripheral membrane protein</topology>
        <orientation evidence="1">Cytoplasmic side</orientation>
    </subcellularLocation>
    <subcellularLocation>
        <location evidence="1">Cytoplasm</location>
        <location evidence="1">Cytoskeleton</location>
        <location evidence="1">Actin patch</location>
    </subcellularLocation>
    <text evidence="1">Cytoplasmic and cortical actin patches.</text>
</comment>
<comment type="similarity">
    <text evidence="5">Belongs to the END3 family.</text>
</comment>
<comment type="sequence caution" evidence="5">
    <conflict type="erroneous gene model prediction">
        <sequence resource="EMBL-CDS" id="EDN04798"/>
    </conflict>
</comment>
<gene>
    <name type="primary">END3</name>
    <name type="ORF">HCAG_08460</name>
</gene>
<keyword id="KW-0009">Actin-binding</keyword>
<keyword id="KW-0106">Calcium</keyword>
<keyword id="KW-1003">Cell membrane</keyword>
<keyword id="KW-0175">Coiled coil</keyword>
<keyword id="KW-0963">Cytoplasm</keyword>
<keyword id="KW-0206">Cytoskeleton</keyword>
<keyword id="KW-0254">Endocytosis</keyword>
<keyword id="KW-0967">Endosome</keyword>
<keyword id="KW-0472">Membrane</keyword>
<keyword id="KW-0479">Metal-binding</keyword>
<keyword id="KW-1185">Reference proteome</keyword>
<keyword id="KW-0677">Repeat</keyword>
<sequence>MSEKKIEQWEVERYWEIFSSLSNGQPHLNNAQAATVLRNSRLRDDQLEKVWDLADVDGDGELDFEEFCVAMRLIFDLVNGEYADVPHSLPDWLIPESKAHLVQASRALTGRQPQFERVEEEDDTPGLKDGFDWYMSPGDKSKYEEIYSANRNHRGEITFDSLQPLYDSLAVPDTDIRSAWNLVNPSASSTISKDATLAFLHILNNRHEGYRIPRTVPASLRASFESNKIDYQLDNVRPAQRWGADTDVDTSTGRKAKFGDAYLSRLGVGGRTTYRPQGTDFSNTIQDQEWEKVRLRRELAELEKKLEAADGAMESRKGGGGSVNGGPNWTLIKKEALQLLEYKERELRELREGTGKVKEGESLERLREDVKTVGDQVEGLRAHLAKRNETLTELKDQIREEKRSR</sequence>